<comment type="function">
    <text>In the hair cortex, hair keratin intermediate filaments are embedded in an interfilamentous matrix, consisting of hair keratin-associated proteins (KRTAP), which are essential for the formation of a rigid and resistant hair shaft through their extensive disulfide bond cross-linking with abundant cysteine residues of hair keratins. The matrix proteins include the high-sulfur and high-glycine-tyrosine keratins.</text>
</comment>
<comment type="subunit">
    <text>Interacts with hair keratins.</text>
</comment>
<comment type="interaction">
    <interactant intactId="EBI-11993254">
        <id>Q9BYR2</id>
    </interactant>
    <interactant intactId="EBI-4400025">
        <id>Q9Y2T1</id>
        <label>AXIN2</label>
    </interactant>
    <organismsDiffer>false</organismsDiffer>
    <experiments>3</experiments>
</comment>
<comment type="interaction">
    <interactant intactId="EBI-11993254">
        <id>Q9BYR2</id>
    </interactant>
    <interactant intactId="EBI-2949658">
        <id>O95429</id>
        <label>BAG4</label>
    </interactant>
    <organismsDiffer>false</organismsDiffer>
    <experiments>3</experiments>
</comment>
<comment type="interaction">
    <interactant intactId="EBI-11993254">
        <id>Q9BYR2</id>
    </interactant>
    <interactant intactId="EBI-713677">
        <id>Q9UGL9</id>
        <label>CRCT1</label>
    </interactant>
    <organismsDiffer>false</organismsDiffer>
    <experiments>4</experiments>
</comment>
<comment type="interaction">
    <interactant intactId="EBI-11993254">
        <id>Q9BYR2</id>
    </interactant>
    <interactant intactId="EBI-10192698">
        <id>Q02930-3</id>
        <label>CREB5</label>
    </interactant>
    <organismsDiffer>false</organismsDiffer>
    <experiments>3</experiments>
</comment>
<comment type="interaction">
    <interactant intactId="EBI-11993254">
        <id>Q9BYR2</id>
    </interactant>
    <interactant intactId="EBI-3867333">
        <id>A8MQ03</id>
        <label>CYSRT1</label>
    </interactant>
    <organismsDiffer>false</organismsDiffer>
    <experiments>3</experiments>
</comment>
<comment type="interaction">
    <interactant intactId="EBI-11993254">
        <id>Q9BYR2</id>
    </interactant>
    <interactant intactId="EBI-11956087">
        <id>Q5HYJ3-3</id>
        <label>FAM76B</label>
    </interactant>
    <organismsDiffer>false</organismsDiffer>
    <experiments>3</experiments>
</comment>
<comment type="interaction">
    <interactant intactId="EBI-11993254">
        <id>Q9BYR2</id>
    </interactant>
    <interactant intactId="EBI-719816">
        <id>Q9NWN3</id>
        <label>FBXO34</label>
    </interactant>
    <organismsDiffer>false</organismsDiffer>
    <experiments>5</experiments>
</comment>
<comment type="interaction">
    <interactant intactId="EBI-11993254">
        <id>Q9BYR2</id>
    </interactant>
    <interactant intactId="EBI-9090198">
        <id>P15976-2</id>
        <label>GATA1</label>
    </interactant>
    <organismsDiffer>false</organismsDiffer>
    <experiments>3</experiments>
</comment>
<comment type="interaction">
    <interactant intactId="EBI-11993254">
        <id>Q9BYR2</id>
    </interactant>
    <interactant intactId="EBI-374781">
        <id>O76003</id>
        <label>GLRX3</label>
    </interactant>
    <organismsDiffer>false</organismsDiffer>
    <experiments>5</experiments>
</comment>
<comment type="interaction">
    <interactant intactId="EBI-11993254">
        <id>Q9BYR2</id>
    </interactant>
    <interactant intactId="EBI-740785">
        <id>P49639</id>
        <label>HOXA1</label>
    </interactant>
    <organismsDiffer>false</organismsDiffer>
    <experiments>7</experiments>
</comment>
<comment type="interaction">
    <interactant intactId="EBI-11993254">
        <id>Q9BYR2</id>
    </interactant>
    <interactant intactId="EBI-10981970">
        <id>Q5T749</id>
        <label>KPRP</label>
    </interactant>
    <organismsDiffer>false</organismsDiffer>
    <experiments>5</experiments>
</comment>
<comment type="interaction">
    <interactant intactId="EBI-11993254">
        <id>Q9BYR2</id>
    </interactant>
    <interactant intactId="EBI-11959885">
        <id>Q07627</id>
        <label>KRTAP1-1</label>
    </interactant>
    <organismsDiffer>false</organismsDiffer>
    <experiments>3</experiments>
</comment>
<comment type="interaction">
    <interactant intactId="EBI-11993254">
        <id>Q9BYR2</id>
    </interactant>
    <interactant intactId="EBI-11749135">
        <id>Q8IUG1</id>
        <label>KRTAP1-3</label>
    </interactant>
    <organismsDiffer>false</organismsDiffer>
    <experiments>3</experiments>
</comment>
<comment type="interaction">
    <interactant intactId="EBI-11993254">
        <id>Q9BYR2</id>
    </interactant>
    <interactant intactId="EBI-12012928">
        <id>P60371</id>
        <label>KRTAP10-6</label>
    </interactant>
    <organismsDiffer>false</organismsDiffer>
    <experiments>3</experiments>
</comment>
<comment type="interaction">
    <interactant intactId="EBI-11993254">
        <id>Q9BYR2</id>
    </interactant>
    <interactant intactId="EBI-10172290">
        <id>P60409</id>
        <label>KRTAP10-7</label>
    </interactant>
    <organismsDiffer>false</organismsDiffer>
    <experiments>3</experiments>
</comment>
<comment type="interaction">
    <interactant intactId="EBI-11993254">
        <id>Q9BYR2</id>
    </interactant>
    <interactant intactId="EBI-10171774">
        <id>P60410</id>
        <label>KRTAP10-8</label>
    </interactant>
    <organismsDiffer>false</organismsDiffer>
    <experiments>3</experiments>
</comment>
<comment type="interaction">
    <interactant intactId="EBI-11993254">
        <id>Q9BYR2</id>
    </interactant>
    <interactant intactId="EBI-10210845">
        <id>P59990</id>
        <label>KRTAP12-1</label>
    </interactant>
    <organismsDiffer>false</organismsDiffer>
    <experiments>3</experiments>
</comment>
<comment type="interaction">
    <interactant intactId="EBI-11993254">
        <id>Q9BYR2</id>
    </interactant>
    <interactant intactId="EBI-11953846">
        <id>Q52LG2</id>
        <label>KRTAP13-2</label>
    </interactant>
    <organismsDiffer>false</organismsDiffer>
    <experiments>3</experiments>
</comment>
<comment type="interaction">
    <interactant intactId="EBI-11993254">
        <id>Q9BYR2</id>
    </interactant>
    <interactant intactId="EBI-10172511">
        <id>Q9BYR5</id>
        <label>KRTAP4-2</label>
    </interactant>
    <organismsDiffer>false</organismsDiffer>
    <experiments>3</experiments>
</comment>
<comment type="interaction">
    <interactant intactId="EBI-11993254">
        <id>Q9BYR2</id>
    </interactant>
    <interactant intactId="EBI-11958132">
        <id>Q9BYR3</id>
        <label>KRTAP4-4</label>
    </interactant>
    <organismsDiffer>false</organismsDiffer>
    <experiments>3</experiments>
</comment>
<comment type="interaction">
    <interactant intactId="EBI-11993254">
        <id>Q9BYR2</id>
    </interactant>
    <interactant intactId="EBI-11958178">
        <id>Q701N4</id>
        <label>KRTAP5-2</label>
    </interactant>
    <organismsDiffer>false</organismsDiffer>
    <experiments>3</experiments>
</comment>
<comment type="interaction">
    <interactant intactId="EBI-11993254">
        <id>Q9BYR2</id>
    </interactant>
    <interactant intactId="EBI-3958099">
        <id>P26371</id>
        <label>KRTAP5-9</label>
    </interactant>
    <organismsDiffer>false</organismsDiffer>
    <experiments>3</experiments>
</comment>
<comment type="interaction">
    <interactant intactId="EBI-11993254">
        <id>Q9BYR2</id>
    </interactant>
    <interactant intactId="EBI-12111050">
        <id>Q3LI64</id>
        <label>KRTAP6-1</label>
    </interactant>
    <organismsDiffer>false</organismsDiffer>
    <experiments>3</experiments>
</comment>
<comment type="interaction">
    <interactant intactId="EBI-11993254">
        <id>Q9BYR2</id>
    </interactant>
    <interactant intactId="EBI-1043191">
        <id>Q9BYQ3</id>
        <label>KRTAP9-3</label>
    </interactant>
    <organismsDiffer>false</organismsDiffer>
    <experiments>3</experiments>
</comment>
<comment type="interaction">
    <interactant intactId="EBI-11993254">
        <id>Q9BYR2</id>
    </interactant>
    <interactant intactId="EBI-11962058">
        <id>Q5T7P2</id>
        <label>LCE1A</label>
    </interactant>
    <organismsDiffer>false</organismsDiffer>
    <experiments>3</experiments>
</comment>
<comment type="interaction">
    <interactant intactId="EBI-11993254">
        <id>Q9BYR2</id>
    </interactant>
    <interactant intactId="EBI-10245913">
        <id>Q5T7P3</id>
        <label>LCE1B</label>
    </interactant>
    <organismsDiffer>false</organismsDiffer>
    <experiments>3</experiments>
</comment>
<comment type="interaction">
    <interactant intactId="EBI-11993254">
        <id>Q9BYR2</id>
    </interactant>
    <interactant intactId="EBI-12224199">
        <id>Q5T751</id>
        <label>LCE1C</label>
    </interactant>
    <organismsDiffer>false</organismsDiffer>
    <experiments>5</experiments>
</comment>
<comment type="interaction">
    <interactant intactId="EBI-11993254">
        <id>Q9BYR2</id>
    </interactant>
    <interactant intactId="EBI-11741311">
        <id>Q5T752</id>
        <label>LCE1D</label>
    </interactant>
    <organismsDiffer>false</organismsDiffer>
    <experiments>3</experiments>
</comment>
<comment type="interaction">
    <interactant intactId="EBI-11993254">
        <id>Q9BYR2</id>
    </interactant>
    <interactant intactId="EBI-11955335">
        <id>Q5T753</id>
        <label>LCE1E</label>
    </interactant>
    <organismsDiffer>false</organismsDiffer>
    <experiments>3</experiments>
</comment>
<comment type="interaction">
    <interactant intactId="EBI-11993254">
        <id>Q9BYR2</id>
    </interactant>
    <interactant intactId="EBI-11958008">
        <id>Q5T754</id>
        <label>LCE1F</label>
    </interactant>
    <organismsDiffer>false</organismsDiffer>
    <experiments>3</experiments>
</comment>
<comment type="interaction">
    <interactant intactId="EBI-11993254">
        <id>Q9BYR2</id>
    </interactant>
    <interactant intactId="EBI-10246607">
        <id>Q5TA79</id>
        <label>LCE2A</label>
    </interactant>
    <organismsDiffer>false</organismsDiffer>
    <experiments>3</experiments>
</comment>
<comment type="interaction">
    <interactant intactId="EBI-11993254">
        <id>Q9BYR2</id>
    </interactant>
    <interactant intactId="EBI-11478468">
        <id>O14633</id>
        <label>LCE2B</label>
    </interactant>
    <organismsDiffer>false</organismsDiffer>
    <experiments>3</experiments>
</comment>
<comment type="interaction">
    <interactant intactId="EBI-11993254">
        <id>Q9BYR2</id>
    </interactant>
    <interactant intactId="EBI-11973993">
        <id>Q5TA81</id>
        <label>LCE2C</label>
    </interactant>
    <organismsDiffer>false</organismsDiffer>
    <experiments>4</experiments>
</comment>
<comment type="interaction">
    <interactant intactId="EBI-11993254">
        <id>Q9BYR2</id>
    </interactant>
    <interactant intactId="EBI-9394625">
        <id>Q5TA76</id>
        <label>LCE3A</label>
    </interactant>
    <organismsDiffer>false</organismsDiffer>
    <experiments>5</experiments>
</comment>
<comment type="interaction">
    <interactant intactId="EBI-11993254">
        <id>Q9BYR2</id>
    </interactant>
    <interactant intactId="EBI-11974495">
        <id>Q5TA77</id>
        <label>LCE3B</label>
    </interactant>
    <organismsDiffer>false</organismsDiffer>
    <experiments>3</experiments>
</comment>
<comment type="interaction">
    <interactant intactId="EBI-11993254">
        <id>Q9BYR2</id>
    </interactant>
    <interactant intactId="EBI-10245291">
        <id>Q5T5A8</id>
        <label>LCE3C</label>
    </interactant>
    <organismsDiffer>false</organismsDiffer>
    <experiments>8</experiments>
</comment>
<comment type="interaction">
    <interactant intactId="EBI-11993254">
        <id>Q9BYR2</id>
    </interactant>
    <interactant intactId="EBI-6658837">
        <id>Q9BYE3</id>
        <label>LCE3D</label>
    </interactant>
    <organismsDiffer>false</organismsDiffer>
    <experiments>5</experiments>
</comment>
<comment type="interaction">
    <interactant intactId="EBI-11993254">
        <id>Q9BYR2</id>
    </interactant>
    <interactant intactId="EBI-10245456">
        <id>Q5T5B0</id>
        <label>LCE3E</label>
    </interactant>
    <organismsDiffer>false</organismsDiffer>
    <experiments>5</experiments>
</comment>
<comment type="interaction">
    <interactant intactId="EBI-11993254">
        <id>Q9BYR2</id>
    </interactant>
    <interactant intactId="EBI-10246358">
        <id>Q5TA78</id>
        <label>LCE4A</label>
    </interactant>
    <organismsDiffer>false</organismsDiffer>
    <experiments>5</experiments>
</comment>
<comment type="interaction">
    <interactant intactId="EBI-11993254">
        <id>Q9BYR2</id>
    </interactant>
    <interactant intactId="EBI-11955689">
        <id>Q5TCM9</id>
        <label>LCE5A</label>
    </interactant>
    <organismsDiffer>false</organismsDiffer>
    <experiments>3</experiments>
</comment>
<comment type="interaction">
    <interactant intactId="EBI-11993254">
        <id>Q9BYR2</id>
    </interactant>
    <interactant intactId="EBI-18115868">
        <id>Q5T871</id>
        <label>LELP1</label>
    </interactant>
    <organismsDiffer>false</organismsDiffer>
    <experiments>3</experiments>
</comment>
<comment type="interaction">
    <interactant intactId="EBI-11993254">
        <id>Q9BYR2</id>
    </interactant>
    <interactant intactId="EBI-16439278">
        <id>Q6FHY5</id>
        <label>MEOX2</label>
    </interactant>
    <organismsDiffer>false</organismsDiffer>
    <experiments>3</experiments>
</comment>
<comment type="interaction">
    <interactant intactId="EBI-11993254">
        <id>Q9BYR2</id>
    </interactant>
    <interactant intactId="EBI-22310682">
        <id>P0DPK4</id>
        <label>NOTCH2NLC</label>
    </interactant>
    <organismsDiffer>false</organismsDiffer>
    <experiments>3</experiments>
</comment>
<comment type="interaction">
    <interactant intactId="EBI-11993254">
        <id>Q9BYR2</id>
    </interactant>
    <interactant intactId="EBI-1210753">
        <id>Q7Z417</id>
        <label>NUFIP2</label>
    </interactant>
    <organismsDiffer>false</organismsDiffer>
    <experiments>3</experiments>
</comment>
<comment type="interaction">
    <interactant intactId="EBI-11993254">
        <id>Q9BYR2</id>
    </interactant>
    <interactant intactId="EBI-740446">
        <id>P32242</id>
        <label>OTX1</label>
    </interactant>
    <organismsDiffer>false</organismsDiffer>
    <experiments>3</experiments>
</comment>
<comment type="interaction">
    <interactant intactId="EBI-11993254">
        <id>Q9BYR2</id>
    </interactant>
    <interactant intactId="EBI-1249608">
        <id>Q5VY43</id>
        <label>PEAR1</label>
    </interactant>
    <organismsDiffer>false</organismsDiffer>
    <experiments>3</experiments>
</comment>
<comment type="interaction">
    <interactant intactId="EBI-11993254">
        <id>Q9BYR2</id>
    </interactant>
    <interactant intactId="EBI-18165900">
        <id>A0JP26</id>
        <label>POTEB3</label>
    </interactant>
    <organismsDiffer>false</organismsDiffer>
    <experiments>3</experiments>
</comment>
<comment type="interaction">
    <interactant intactId="EBI-11993254">
        <id>Q9BYR2</id>
    </interactant>
    <interactant intactId="EBI-17236143">
        <id>Q12837</id>
        <label>POU4F2</label>
    </interactant>
    <organismsDiffer>false</organismsDiffer>
    <experiments>3</experiments>
</comment>
<comment type="interaction">
    <interactant intactId="EBI-11993254">
        <id>Q9BYR2</id>
    </interactant>
    <interactant intactId="EBI-1053424">
        <id>O43741</id>
        <label>PRKAB2</label>
    </interactant>
    <organismsDiffer>false</organismsDiffer>
    <experiments>3</experiments>
</comment>
<comment type="interaction">
    <interactant intactId="EBI-11993254">
        <id>Q9BYR2</id>
    </interactant>
    <interactant intactId="EBI-18560266">
        <id>Q92753-1</id>
        <label>RORB</label>
    </interactant>
    <organismsDiffer>false</organismsDiffer>
    <experiments>3</experiments>
</comment>
<comment type="interaction">
    <interactant intactId="EBI-11993254">
        <id>Q9BYR2</id>
    </interactant>
    <interactant intactId="EBI-749607">
        <id>Q9NR46</id>
        <label>SH3GLB2</label>
    </interactant>
    <organismsDiffer>false</organismsDiffer>
    <experiments>3</experiments>
</comment>
<comment type="interaction">
    <interactant intactId="EBI-11993254">
        <id>Q9BYR2</id>
    </interactant>
    <interactant intactId="EBI-11955083">
        <id>Q9NUL5-4</id>
        <label>SHFL</label>
    </interactant>
    <organismsDiffer>false</organismsDiffer>
    <experiments>3</experiments>
</comment>
<comment type="interaction">
    <interactant intactId="EBI-11993254">
        <id>Q9BYR2</id>
    </interactant>
    <interactant intactId="EBI-1044546">
        <id>Q9Y6M7</id>
        <label>SLC4A7</label>
    </interactant>
    <organismsDiffer>false</organismsDiffer>
    <experiments>3</experiments>
</comment>
<comment type="interaction">
    <interactant intactId="EBI-11993254">
        <id>Q9BYR2</id>
    </interactant>
    <interactant intactId="EBI-750494">
        <id>P49901</id>
        <label>SMCP</label>
    </interactant>
    <organismsDiffer>false</organismsDiffer>
    <experiments>5</experiments>
</comment>
<comment type="interaction">
    <interactant intactId="EBI-11993254">
        <id>Q9BYR2</id>
    </interactant>
    <interactant intactId="EBI-5235829">
        <id>Q8IWZ5</id>
        <label>TRIM42</label>
    </interactant>
    <organismsDiffer>false</organismsDiffer>
    <experiments>3</experiments>
</comment>
<comment type="interaction">
    <interactant intactId="EBI-11993254">
        <id>Q9BYR2</id>
    </interactant>
    <interactant intactId="EBI-8652667">
        <id>O14817</id>
        <label>TSPAN4</label>
    </interactant>
    <organismsDiffer>false</organismsDiffer>
    <experiments>3</experiments>
</comment>
<comment type="interaction">
    <interactant intactId="EBI-11993254">
        <id>Q9BYR2</id>
    </interactant>
    <interactant intactId="EBI-765538">
        <id>P25490</id>
        <label>YY1</label>
    </interactant>
    <organismsDiffer>false</organismsDiffer>
    <experiments>3</experiments>
</comment>
<comment type="interaction">
    <interactant intactId="EBI-11993254">
        <id>Q9BYR2</id>
    </interactant>
    <interactant intactId="EBI-2555731">
        <id>Q9H707</id>
        <label>ZNF552</label>
    </interactant>
    <organismsDiffer>false</organismsDiffer>
    <experiments>6</experiments>
</comment>
<comment type="interaction">
    <interactant intactId="EBI-11993254">
        <id>Q9BYR2</id>
    </interactant>
    <interactant intactId="EBI-10251462">
        <id>Q6NX45</id>
        <label>ZNF774</label>
    </interactant>
    <organismsDiffer>false</organismsDiffer>
    <experiments>3</experiments>
</comment>
<comment type="interaction">
    <interactant intactId="EBI-11993254">
        <id>Q9BYR2</id>
    </interactant>
    <interactant intactId="EBI-5667516">
        <id>Q9Y2P0</id>
        <label>ZNF835</label>
    </interactant>
    <organismsDiffer>false</organismsDiffer>
    <experiments>3</experiments>
</comment>
<comment type="interaction">
    <interactant intactId="EBI-11993254">
        <id>Q9BYR2</id>
    </interactant>
    <interactant intactId="EBI-11962574">
        <id>Q96EG3</id>
        <label>ZNF837</label>
    </interactant>
    <organismsDiffer>false</organismsDiffer>
    <experiments>3</experiments>
</comment>
<comment type="tissue specificity">
    <text evidence="2">Expressed in the hair follicles.</text>
</comment>
<comment type="polymorphism">
    <text evidence="2">Numerous size polymorphism are present in KRTAP4 gene family, which are mainly due to variations in the sequence encoding cysteine-rich repeat segments (PubMed:15955084). Allele shown is KAP4.5-v1 (PubMed:15955084).</text>
</comment>
<comment type="similarity">
    <text evidence="3">Belongs to the KRTAP type 4 family.</text>
</comment>
<gene>
    <name type="primary">KRTAP4-5</name>
    <name type="synonym">KAP4.5</name>
    <name type="synonym">KRTAP4.5</name>
</gene>
<keyword id="KW-0416">Keratin</keyword>
<keyword id="KW-1267">Proteomics identification</keyword>
<keyword id="KW-1185">Reference proteome</keyword>
<keyword id="KW-0677">Repeat</keyword>
<proteinExistence type="evidence at protein level"/>
<accession>Q9BYR2</accession>
<evidence type="ECO:0000269" key="1">
    <source>
    </source>
</evidence>
<evidence type="ECO:0000269" key="2">
    <source>
    </source>
</evidence>
<evidence type="ECO:0000305" key="3"/>
<feature type="chain" id="PRO_0000185173" description="Keratin-associated protein 4-5">
    <location>
        <begin position="1"/>
        <end position="181"/>
    </location>
</feature>
<feature type="repeat" description="1">
    <location>
        <begin position="5"/>
        <end position="9"/>
    </location>
</feature>
<feature type="repeat" description="2">
    <location>
        <begin position="20"/>
        <end position="24"/>
    </location>
</feature>
<feature type="repeat" description="3">
    <location>
        <begin position="25"/>
        <end position="29"/>
    </location>
</feature>
<feature type="repeat" description="4">
    <location>
        <begin position="30"/>
        <end position="34"/>
    </location>
</feature>
<feature type="repeat" description="5">
    <location>
        <begin position="35"/>
        <end position="39"/>
    </location>
</feature>
<feature type="repeat" description="6">
    <location>
        <begin position="40"/>
        <end position="44"/>
    </location>
</feature>
<feature type="repeat" description="7">
    <location>
        <begin position="45"/>
        <end position="49"/>
    </location>
</feature>
<feature type="repeat" description="8">
    <location>
        <begin position="55"/>
        <end position="59"/>
    </location>
</feature>
<feature type="repeat" description="9">
    <location>
        <begin position="60"/>
        <end position="64"/>
    </location>
</feature>
<feature type="repeat" description="10">
    <location>
        <begin position="65"/>
        <end position="69"/>
    </location>
</feature>
<feature type="repeat" description="11">
    <location>
        <begin position="70"/>
        <end position="74"/>
    </location>
</feature>
<feature type="repeat" description="12">
    <location>
        <begin position="75"/>
        <end position="79"/>
    </location>
</feature>
<feature type="repeat" description="13">
    <location>
        <begin position="80"/>
        <end position="84"/>
    </location>
</feature>
<feature type="repeat" description="14">
    <location>
        <begin position="85"/>
        <end position="89"/>
    </location>
</feature>
<feature type="repeat" description="15">
    <location>
        <begin position="90"/>
        <end position="94"/>
    </location>
</feature>
<feature type="repeat" description="16">
    <location>
        <begin position="95"/>
        <end position="99"/>
    </location>
</feature>
<feature type="repeat" description="17">
    <location>
        <begin position="100"/>
        <end position="104"/>
    </location>
</feature>
<feature type="repeat" description="18">
    <location>
        <begin position="105"/>
        <end position="109"/>
    </location>
</feature>
<feature type="repeat" description="19">
    <location>
        <begin position="110"/>
        <end position="114"/>
    </location>
</feature>
<feature type="repeat" description="20">
    <location>
        <begin position="115"/>
        <end position="119"/>
    </location>
</feature>
<feature type="repeat" description="21">
    <location>
        <begin position="120"/>
        <end position="124"/>
    </location>
</feature>
<feature type="repeat" description="22">
    <location>
        <begin position="125"/>
        <end position="129"/>
    </location>
</feature>
<feature type="repeat" description="23">
    <location>
        <begin position="130"/>
        <end position="134"/>
    </location>
</feature>
<feature type="repeat" description="24">
    <location>
        <begin position="135"/>
        <end position="139"/>
    </location>
</feature>
<feature type="repeat" description="25">
    <location>
        <begin position="140"/>
        <end position="144"/>
    </location>
</feature>
<feature type="repeat" description="26">
    <location>
        <begin position="145"/>
        <end position="149"/>
    </location>
</feature>
<feature type="region of interest" description="26 X 5 AA repeats of C-C-[GRQVCHIEK]-[SPTR]-[VSTQYC]">
    <location>
        <begin position="5"/>
        <end position="154"/>
    </location>
</feature>
<feature type="sequence variant" id="VAR_057648" description="In dbSNP:rs238829.">
    <original>C</original>
    <variation>R</variation>
    <location>
        <position position="6"/>
    </location>
</feature>
<feature type="sequence variant" id="VAR_064560" description="In dbSNP:rs1497383." evidence="1">
    <original>R</original>
    <variation>C</variation>
    <location>
        <position position="22"/>
    </location>
</feature>
<feature type="sequence variant" id="VAR_064561" description="In dbSNP:rs238830." evidence="2">
    <original>R</original>
    <variation>H</variation>
    <location>
        <position position="67"/>
    </location>
</feature>
<feature type="sequence variant" id="VAR_063826">
    <original>C</original>
    <variation>CCCRPS</variation>
    <location>
        <position position="80"/>
    </location>
</feature>
<feature type="sequence variant" id="VAR_064562" description="In dbSNP:rs1846044." evidence="1">
    <original>C</original>
    <variation>Y</variation>
    <location>
        <position position="125"/>
    </location>
</feature>
<protein>
    <recommendedName>
        <fullName>Keratin-associated protein 4-5</fullName>
    </recommendedName>
    <alternativeName>
        <fullName>Keratin-associated protein 4.5</fullName>
    </alternativeName>
    <alternativeName>
        <fullName>Ultrahigh sulfur keratin-associated protein 4.5</fullName>
    </alternativeName>
</protein>
<organism>
    <name type="scientific">Homo sapiens</name>
    <name type="common">Human</name>
    <dbReference type="NCBI Taxonomy" id="9606"/>
    <lineage>
        <taxon>Eukaryota</taxon>
        <taxon>Metazoa</taxon>
        <taxon>Chordata</taxon>
        <taxon>Craniata</taxon>
        <taxon>Vertebrata</taxon>
        <taxon>Euteleostomi</taxon>
        <taxon>Mammalia</taxon>
        <taxon>Eutheria</taxon>
        <taxon>Euarchontoglires</taxon>
        <taxon>Primates</taxon>
        <taxon>Haplorrhini</taxon>
        <taxon>Catarrhini</taxon>
        <taxon>Hominidae</taxon>
        <taxon>Homo</taxon>
    </lineage>
</organism>
<sequence length="181" mass="19363">MVSSCCGSVSSEQSCGLENCCRPSCCQTTCCRTTCCRPSCCKPQCCQSVCYQPTCCHPSCCISSCCRPYCCESSCCRPCCCQTTCCRTTCCRTTCCCPSCCVSSCCRPQCCQSVCCQPTCCRPSCCISSCCHPSCCESSCCRPCCCVRPVCGRVSCHTTCYRPTCVISTCPRPLCCASSCC</sequence>
<dbReference type="EMBL" id="AJ406937">
    <property type="protein sequence ID" value="CAC27576.1"/>
    <property type="molecule type" value="mRNA"/>
</dbReference>
<dbReference type="EMBL" id="AC100808">
    <property type="status" value="NOT_ANNOTATED_CDS"/>
    <property type="molecule type" value="Genomic_DNA"/>
</dbReference>
<dbReference type="CCDS" id="CCDS32650.1"/>
<dbReference type="RefSeq" id="NP_149445.3">
    <property type="nucleotide sequence ID" value="NM_033188.3"/>
</dbReference>
<dbReference type="BioGRID" id="124453">
    <property type="interactions" value="76"/>
</dbReference>
<dbReference type="FunCoup" id="Q9BYR2">
    <property type="interactions" value="49"/>
</dbReference>
<dbReference type="IntAct" id="Q9BYR2">
    <property type="interactions" value="61"/>
</dbReference>
<dbReference type="STRING" id="9606.ENSP00000340546"/>
<dbReference type="BioMuta" id="KRTAP4-5"/>
<dbReference type="DMDM" id="380865482"/>
<dbReference type="MassIVE" id="Q9BYR2"/>
<dbReference type="PaxDb" id="9606-ENSP00000340546"/>
<dbReference type="PeptideAtlas" id="Q9BYR2"/>
<dbReference type="ProteomicsDB" id="79691"/>
<dbReference type="Antibodypedia" id="78096">
    <property type="antibodies" value="1 antibodies from 1 providers"/>
</dbReference>
<dbReference type="DNASU" id="85289"/>
<dbReference type="Ensembl" id="ENST00000343246.6">
    <property type="protein sequence ID" value="ENSP00000340546.4"/>
    <property type="gene ID" value="ENSG00000198271.5"/>
</dbReference>
<dbReference type="Ensembl" id="ENST00000709604.1">
    <property type="protein sequence ID" value="ENSP00000517791.1"/>
    <property type="gene ID" value="ENSG00000292040.1"/>
</dbReference>
<dbReference type="GeneID" id="85289"/>
<dbReference type="KEGG" id="hsa:85289"/>
<dbReference type="MANE-Select" id="ENST00000343246.6">
    <property type="protein sequence ID" value="ENSP00000340546.4"/>
    <property type="RefSeq nucleotide sequence ID" value="NM_033188.4"/>
    <property type="RefSeq protein sequence ID" value="NP_149445.3"/>
</dbReference>
<dbReference type="UCSC" id="uc060fat.1">
    <property type="organism name" value="human"/>
</dbReference>
<dbReference type="AGR" id="HGNC:18899"/>
<dbReference type="CTD" id="85289"/>
<dbReference type="GeneCards" id="KRTAP4-5"/>
<dbReference type="HGNC" id="HGNC:18899">
    <property type="gene designation" value="KRTAP4-5"/>
</dbReference>
<dbReference type="HPA" id="ENSG00000198271">
    <property type="expression patterns" value="Tissue enriched (skin)"/>
</dbReference>
<dbReference type="neXtProt" id="NX_Q9BYR2"/>
<dbReference type="OpenTargets" id="ENSG00000198271"/>
<dbReference type="PharmGKB" id="PA38748"/>
<dbReference type="VEuPathDB" id="HostDB:ENSG00000198271"/>
<dbReference type="eggNOG" id="KOG4726">
    <property type="taxonomic scope" value="Eukaryota"/>
</dbReference>
<dbReference type="GeneTree" id="ENSGT00940000165435"/>
<dbReference type="HOGENOM" id="CLU_113141_2_0_1"/>
<dbReference type="InParanoid" id="Q9BYR2"/>
<dbReference type="OMA" id="WCVPTCV"/>
<dbReference type="PAN-GO" id="Q9BYR2">
    <property type="GO annotations" value="0 GO annotations based on evolutionary models"/>
</dbReference>
<dbReference type="TreeFam" id="TF351356"/>
<dbReference type="PathwayCommons" id="Q9BYR2"/>
<dbReference type="Reactome" id="R-HSA-6805567">
    <property type="pathway name" value="Keratinization"/>
</dbReference>
<dbReference type="SignaLink" id="Q9BYR2"/>
<dbReference type="BioGRID-ORCS" id="85289">
    <property type="hits" value="20 hits in 1064 CRISPR screens"/>
</dbReference>
<dbReference type="GenomeRNAi" id="85289"/>
<dbReference type="Pharos" id="Q9BYR2">
    <property type="development level" value="Tbio"/>
</dbReference>
<dbReference type="PRO" id="PR:Q9BYR2"/>
<dbReference type="Proteomes" id="UP000005640">
    <property type="component" value="Chromosome 17"/>
</dbReference>
<dbReference type="RNAct" id="Q9BYR2">
    <property type="molecule type" value="protein"/>
</dbReference>
<dbReference type="Bgee" id="ENSG00000198271">
    <property type="expression patterns" value="Expressed in upper arm skin and 26 other cell types or tissues"/>
</dbReference>
<dbReference type="GO" id="GO:0005829">
    <property type="term" value="C:cytosol"/>
    <property type="evidence" value="ECO:0000304"/>
    <property type="project" value="Reactome"/>
</dbReference>
<dbReference type="GO" id="GO:0045095">
    <property type="term" value="C:keratin filament"/>
    <property type="evidence" value="ECO:0007669"/>
    <property type="project" value="InterPro"/>
</dbReference>
<dbReference type="GO" id="GO:0042633">
    <property type="term" value="P:hair cycle"/>
    <property type="evidence" value="ECO:0000314"/>
    <property type="project" value="UniProtKB"/>
</dbReference>
<dbReference type="InterPro" id="IPR002494">
    <property type="entry name" value="KAP"/>
</dbReference>
<dbReference type="PANTHER" id="PTHR23262">
    <property type="entry name" value="KERATIN ASSOCIATED PROTEIN"/>
    <property type="match status" value="1"/>
</dbReference>
<dbReference type="PANTHER" id="PTHR23262:SF183">
    <property type="entry name" value="KERATIN-ASSOCIATED PROTEIN 4-11-RELATED"/>
    <property type="match status" value="1"/>
</dbReference>
<dbReference type="Pfam" id="PF13885">
    <property type="entry name" value="Keratin_B2_2"/>
    <property type="match status" value="2"/>
</dbReference>
<name>KRA45_HUMAN</name>
<reference key="1">
    <citation type="journal article" date="2001" name="J. Biol. Chem.">
        <title>Characterization of a cluster of human high/ultrahigh sulfur keratin-associated protein genes embedded in the type I keratin gene domain on chromosome 17q12-21.</title>
        <authorList>
            <person name="Rogers M.A."/>
            <person name="Langbein L."/>
            <person name="Winter H."/>
            <person name="Ehmann C."/>
            <person name="Praetzel S."/>
            <person name="Korn B."/>
            <person name="Schweizer J."/>
        </authorList>
    </citation>
    <scope>NUCLEOTIDE SEQUENCE [MRNA]</scope>
    <scope>VARIANTS CYS-22; CYS-CYS-ARG-PRO-SER-80 INS AND TYR-125</scope>
    <source>
        <tissue>Scalp</tissue>
    </source>
</reference>
<reference key="2">
    <citation type="journal article" date="2006" name="Nature">
        <title>DNA sequence of human chromosome 17 and analysis of rearrangement in the human lineage.</title>
        <authorList>
            <person name="Zody M.C."/>
            <person name="Garber M."/>
            <person name="Adams D.J."/>
            <person name="Sharpe T."/>
            <person name="Harrow J."/>
            <person name="Lupski J.R."/>
            <person name="Nicholson C."/>
            <person name="Searle S.M."/>
            <person name="Wilming L."/>
            <person name="Young S.K."/>
            <person name="Abouelleil A."/>
            <person name="Allen N.R."/>
            <person name="Bi W."/>
            <person name="Bloom T."/>
            <person name="Borowsky M.L."/>
            <person name="Bugalter B.E."/>
            <person name="Butler J."/>
            <person name="Chang J.L."/>
            <person name="Chen C.-K."/>
            <person name="Cook A."/>
            <person name="Corum B."/>
            <person name="Cuomo C.A."/>
            <person name="de Jong P.J."/>
            <person name="DeCaprio D."/>
            <person name="Dewar K."/>
            <person name="FitzGerald M."/>
            <person name="Gilbert J."/>
            <person name="Gibson R."/>
            <person name="Gnerre S."/>
            <person name="Goldstein S."/>
            <person name="Grafham D.V."/>
            <person name="Grocock R."/>
            <person name="Hafez N."/>
            <person name="Hagopian D.S."/>
            <person name="Hart E."/>
            <person name="Norman C.H."/>
            <person name="Humphray S."/>
            <person name="Jaffe D.B."/>
            <person name="Jones M."/>
            <person name="Kamal M."/>
            <person name="Khodiyar V.K."/>
            <person name="LaButti K."/>
            <person name="Laird G."/>
            <person name="Lehoczky J."/>
            <person name="Liu X."/>
            <person name="Lokyitsang T."/>
            <person name="Loveland J."/>
            <person name="Lui A."/>
            <person name="Macdonald P."/>
            <person name="Major J.E."/>
            <person name="Matthews L."/>
            <person name="Mauceli E."/>
            <person name="McCarroll S.A."/>
            <person name="Mihalev A.H."/>
            <person name="Mudge J."/>
            <person name="Nguyen C."/>
            <person name="Nicol R."/>
            <person name="O'Leary S.B."/>
            <person name="Osoegawa K."/>
            <person name="Schwartz D.C."/>
            <person name="Shaw-Smith C."/>
            <person name="Stankiewicz P."/>
            <person name="Steward C."/>
            <person name="Swarbreck D."/>
            <person name="Venkataraman V."/>
            <person name="Whittaker C.A."/>
            <person name="Yang X."/>
            <person name="Zimmer A.R."/>
            <person name="Bradley A."/>
            <person name="Hubbard T."/>
            <person name="Birren B.W."/>
            <person name="Rogers J."/>
            <person name="Lander E.S."/>
            <person name="Nusbaum C."/>
        </authorList>
    </citation>
    <scope>NUCLEOTIDE SEQUENCE [LARGE SCALE GENOMIC DNA]</scope>
</reference>
<reference key="3">
    <citation type="journal article" date="2005" name="J. Invest. Dermatol.">
        <title>Size polymorphisms in the human ultrahigh sulfur hair keratin-associated protein 4, KAP4, gene family.</title>
        <authorList>
            <person name="Kariya N."/>
            <person name="Shimomura Y."/>
            <person name="Ito M."/>
        </authorList>
    </citation>
    <scope>TISSUE SPECIFICITY</scope>
    <scope>POLYMORPHISM</scope>
    <scope>VARIANT HIS-67</scope>
</reference>